<gene>
    <name evidence="1" type="primary">rpsH</name>
    <name type="ordered locus">Fjoh_0383</name>
</gene>
<reference key="1">
    <citation type="journal article" date="2009" name="Appl. Environ. Microbiol.">
        <title>Novel features of the polysaccharide-digesting gliding bacterium Flavobacterium johnsoniae as revealed by genome sequence analysis.</title>
        <authorList>
            <person name="McBride M.J."/>
            <person name="Xie G."/>
            <person name="Martens E.C."/>
            <person name="Lapidus A."/>
            <person name="Henrissat B."/>
            <person name="Rhodes R.G."/>
            <person name="Goltsman E."/>
            <person name="Wang W."/>
            <person name="Xu J."/>
            <person name="Hunnicutt D.W."/>
            <person name="Staroscik A.M."/>
            <person name="Hoover T.R."/>
            <person name="Cheng Y.Q."/>
            <person name="Stein J.L."/>
        </authorList>
    </citation>
    <scope>NUCLEOTIDE SEQUENCE [LARGE SCALE GENOMIC DNA]</scope>
    <source>
        <strain>ATCC 17061 / DSM 2064 / JCM 8514 / BCRC 14874 / CCUG 350202 / NBRC 14942 / NCIMB 11054 / UW101</strain>
    </source>
</reference>
<accession>A5FN07</accession>
<comment type="function">
    <text evidence="1">One of the primary rRNA binding proteins, it binds directly to 16S rRNA central domain where it helps coordinate assembly of the platform of the 30S subunit.</text>
</comment>
<comment type="subunit">
    <text evidence="1">Part of the 30S ribosomal subunit. Contacts proteins S5 and S12.</text>
</comment>
<comment type="similarity">
    <text evidence="1">Belongs to the universal ribosomal protein uS8 family.</text>
</comment>
<name>RS8_FLAJ1</name>
<keyword id="KW-0687">Ribonucleoprotein</keyword>
<keyword id="KW-0689">Ribosomal protein</keyword>
<keyword id="KW-0694">RNA-binding</keyword>
<keyword id="KW-0699">rRNA-binding</keyword>
<proteinExistence type="inferred from homology"/>
<sequence>MYTDPIADYLTRVRNAVAANHKVVEIPASNLKKEITKILFDQGYILSYKFEQNTVQGSIKIALKYDKDTKEPVIKDIQRISKPGLRKYAGAAKLPRILNGLGIAIVSTSKGLMTGKQAKQLNVGGEVICYVY</sequence>
<protein>
    <recommendedName>
        <fullName evidence="1">Small ribosomal subunit protein uS8</fullName>
    </recommendedName>
    <alternativeName>
        <fullName evidence="2">30S ribosomal protein S8</fullName>
    </alternativeName>
</protein>
<feature type="chain" id="PRO_1000085922" description="Small ribosomal subunit protein uS8">
    <location>
        <begin position="1"/>
        <end position="132"/>
    </location>
</feature>
<organism>
    <name type="scientific">Flavobacterium johnsoniae (strain ATCC 17061 / DSM 2064 / JCM 8514 / BCRC 14874 / CCUG 350202 / NBRC 14942 / NCIMB 11054 / UW101)</name>
    <name type="common">Cytophaga johnsonae</name>
    <dbReference type="NCBI Taxonomy" id="376686"/>
    <lineage>
        <taxon>Bacteria</taxon>
        <taxon>Pseudomonadati</taxon>
        <taxon>Bacteroidota</taxon>
        <taxon>Flavobacteriia</taxon>
        <taxon>Flavobacteriales</taxon>
        <taxon>Flavobacteriaceae</taxon>
        <taxon>Flavobacterium</taxon>
    </lineage>
</organism>
<dbReference type="EMBL" id="CP000685">
    <property type="protein sequence ID" value="ABQ03419.1"/>
    <property type="molecule type" value="Genomic_DNA"/>
</dbReference>
<dbReference type="RefSeq" id="WP_008464306.1">
    <property type="nucleotide sequence ID" value="NZ_MUGZ01000005.1"/>
</dbReference>
<dbReference type="SMR" id="A5FN07"/>
<dbReference type="STRING" id="376686.Fjoh_0383"/>
<dbReference type="KEGG" id="fjo:Fjoh_0383"/>
<dbReference type="eggNOG" id="COG0096">
    <property type="taxonomic scope" value="Bacteria"/>
</dbReference>
<dbReference type="HOGENOM" id="CLU_098428_0_2_10"/>
<dbReference type="OrthoDB" id="9802617at2"/>
<dbReference type="Proteomes" id="UP000006694">
    <property type="component" value="Chromosome"/>
</dbReference>
<dbReference type="GO" id="GO:1990904">
    <property type="term" value="C:ribonucleoprotein complex"/>
    <property type="evidence" value="ECO:0007669"/>
    <property type="project" value="UniProtKB-KW"/>
</dbReference>
<dbReference type="GO" id="GO:0005840">
    <property type="term" value="C:ribosome"/>
    <property type="evidence" value="ECO:0007669"/>
    <property type="project" value="UniProtKB-KW"/>
</dbReference>
<dbReference type="GO" id="GO:0019843">
    <property type="term" value="F:rRNA binding"/>
    <property type="evidence" value="ECO:0007669"/>
    <property type="project" value="UniProtKB-UniRule"/>
</dbReference>
<dbReference type="GO" id="GO:0003735">
    <property type="term" value="F:structural constituent of ribosome"/>
    <property type="evidence" value="ECO:0007669"/>
    <property type="project" value="InterPro"/>
</dbReference>
<dbReference type="GO" id="GO:0006412">
    <property type="term" value="P:translation"/>
    <property type="evidence" value="ECO:0007669"/>
    <property type="project" value="UniProtKB-UniRule"/>
</dbReference>
<dbReference type="FunFam" id="3.30.1370.30:FF:000002">
    <property type="entry name" value="30S ribosomal protein S8"/>
    <property type="match status" value="1"/>
</dbReference>
<dbReference type="FunFam" id="3.30.1490.10:FF:000001">
    <property type="entry name" value="30S ribosomal protein S8"/>
    <property type="match status" value="1"/>
</dbReference>
<dbReference type="Gene3D" id="3.30.1370.30">
    <property type="match status" value="1"/>
</dbReference>
<dbReference type="Gene3D" id="3.30.1490.10">
    <property type="match status" value="1"/>
</dbReference>
<dbReference type="HAMAP" id="MF_01302_B">
    <property type="entry name" value="Ribosomal_uS8_B"/>
    <property type="match status" value="1"/>
</dbReference>
<dbReference type="InterPro" id="IPR000630">
    <property type="entry name" value="Ribosomal_uS8"/>
</dbReference>
<dbReference type="InterPro" id="IPR047863">
    <property type="entry name" value="Ribosomal_uS8_CS"/>
</dbReference>
<dbReference type="InterPro" id="IPR035987">
    <property type="entry name" value="Ribosomal_uS8_sf"/>
</dbReference>
<dbReference type="NCBIfam" id="NF001109">
    <property type="entry name" value="PRK00136.1"/>
    <property type="match status" value="1"/>
</dbReference>
<dbReference type="PANTHER" id="PTHR11758">
    <property type="entry name" value="40S RIBOSOMAL PROTEIN S15A"/>
    <property type="match status" value="1"/>
</dbReference>
<dbReference type="Pfam" id="PF00410">
    <property type="entry name" value="Ribosomal_S8"/>
    <property type="match status" value="1"/>
</dbReference>
<dbReference type="SUPFAM" id="SSF56047">
    <property type="entry name" value="Ribosomal protein S8"/>
    <property type="match status" value="1"/>
</dbReference>
<dbReference type="PROSITE" id="PS00053">
    <property type="entry name" value="RIBOSOMAL_S8"/>
    <property type="match status" value="1"/>
</dbReference>
<evidence type="ECO:0000255" key="1">
    <source>
        <dbReference type="HAMAP-Rule" id="MF_01302"/>
    </source>
</evidence>
<evidence type="ECO:0000305" key="2"/>